<keyword id="KW-0963">Cytoplasm</keyword>
<keyword id="KW-0396">Initiation factor</keyword>
<keyword id="KW-0648">Protein biosynthesis</keyword>
<keyword id="KW-1185">Reference proteome</keyword>
<name>EI2BG_CAEEL</name>
<comment type="function">
    <text evidence="2">Acts as a component of the translation initiation factor 2B (eIF2B) complex, which catalyzes the exchange of GDP for GTP on the eukaryotic initiation factor 2 (eIF2) complex gamma subunit. Its guanine nucleotide exchange factor activity is repressed when bound to eIF2 complex phosphorylated on the alpha subunit, thereby limiting the amount of methionyl-initiator methionine tRNA available to the ribosome and consequently global translation is repressed.</text>
</comment>
<comment type="subunit">
    <text evidence="2">Component of the translation initiation factor 2B (eIF2B) complex which is a heterodecamer of two sets of five different subunits: alpha, beta, gamma, delta and epsilon. Subunits alpha, beta and delta comprise a regulatory subcomplex and subunits epsilon and gamma comprise a catalytic subcomplex. Within the complex, the hexameric regulatory complex resides at the center, with the two heterodimeric catalytic subcomplexes bound on opposite sides.</text>
</comment>
<comment type="subcellular location">
    <subcellularLocation>
        <location evidence="1">Cytoplasm</location>
        <location evidence="1">Cytosol</location>
    </subcellularLocation>
</comment>
<comment type="similarity">
    <text evidence="5">Belongs to the eIF-2B gamma/epsilon subunits family.</text>
</comment>
<comment type="sequence caution" evidence="5">
    <conflict type="frameshift">
        <sequence resource="EMBL-CDS" id="AAA64269"/>
    </conflict>
</comment>
<evidence type="ECO:0000250" key="1">
    <source>
        <dbReference type="UniProtKB" id="P56288"/>
    </source>
</evidence>
<evidence type="ECO:0000250" key="2">
    <source>
        <dbReference type="UniProtKB" id="Q9NR50"/>
    </source>
</evidence>
<evidence type="ECO:0000303" key="3">
    <source>
    </source>
</evidence>
<evidence type="ECO:0000303" key="4">
    <source>
    </source>
</evidence>
<evidence type="ECO:0000305" key="5"/>
<evidence type="ECO:0000312" key="6">
    <source>
        <dbReference type="WormBase" id="C15F1.4"/>
    </source>
</evidence>
<accession>P80361</accession>
<accession>P42004</accession>
<accession>Q9N5Y4</accession>
<dbReference type="EMBL" id="U14521">
    <property type="protein sequence ID" value="AAA64269.1"/>
    <property type="status" value="ALT_FRAME"/>
    <property type="molecule type" value="mRNA"/>
</dbReference>
<dbReference type="EMBL" id="FO080553">
    <property type="protein sequence ID" value="CCD64613.1"/>
    <property type="molecule type" value="Genomic_DNA"/>
</dbReference>
<dbReference type="RefSeq" id="NP_495428.1">
    <property type="nucleotide sequence ID" value="NM_063027.9"/>
</dbReference>
<dbReference type="SMR" id="P80361"/>
<dbReference type="BioGRID" id="39476">
    <property type="interactions" value="3"/>
</dbReference>
<dbReference type="FunCoup" id="P80361">
    <property type="interactions" value="2875"/>
</dbReference>
<dbReference type="STRING" id="6239.C15F1.4.1"/>
<dbReference type="PaxDb" id="6239-C15F1.4"/>
<dbReference type="PeptideAtlas" id="P80361"/>
<dbReference type="EnsemblMetazoa" id="C15F1.4.1">
    <property type="protein sequence ID" value="C15F1.4.1"/>
    <property type="gene ID" value="WBGene00004090"/>
</dbReference>
<dbReference type="GeneID" id="174138"/>
<dbReference type="KEGG" id="cel:CELE_C15F1.4"/>
<dbReference type="UCSC" id="C15F1.4">
    <property type="organism name" value="c. elegans"/>
</dbReference>
<dbReference type="AGR" id="WB:WBGene00004090"/>
<dbReference type="CTD" id="174138"/>
<dbReference type="WormBase" id="C15F1.4">
    <property type="protein sequence ID" value="CE23548"/>
    <property type="gene ID" value="WBGene00004090"/>
    <property type="gene designation" value="eif-2Bgamma"/>
</dbReference>
<dbReference type="eggNOG" id="KOG1462">
    <property type="taxonomic scope" value="Eukaryota"/>
</dbReference>
<dbReference type="GeneTree" id="ENSGT00510000047486"/>
<dbReference type="HOGENOM" id="CLU_016743_0_0_1"/>
<dbReference type="InParanoid" id="P80361"/>
<dbReference type="OMA" id="NCVINPK"/>
<dbReference type="OrthoDB" id="540503at2759"/>
<dbReference type="PhylomeDB" id="P80361"/>
<dbReference type="Reactome" id="R-CEL-72731">
    <property type="pathway name" value="Recycling of eIF2:GDP"/>
</dbReference>
<dbReference type="PRO" id="PR:P80361"/>
<dbReference type="Proteomes" id="UP000001940">
    <property type="component" value="Chromosome II"/>
</dbReference>
<dbReference type="Bgee" id="WBGene00004090">
    <property type="expression patterns" value="Expressed in adult organism and 3 other cell types or tissues"/>
</dbReference>
<dbReference type="GO" id="GO:0005737">
    <property type="term" value="C:cytoplasm"/>
    <property type="evidence" value="ECO:0000314"/>
    <property type="project" value="WormBase"/>
</dbReference>
<dbReference type="GO" id="GO:0005829">
    <property type="term" value="C:cytosol"/>
    <property type="evidence" value="ECO:0007669"/>
    <property type="project" value="UniProtKB-SubCell"/>
</dbReference>
<dbReference type="GO" id="GO:0005851">
    <property type="term" value="C:eukaryotic translation initiation factor 2B complex"/>
    <property type="evidence" value="ECO:0000250"/>
    <property type="project" value="UniProtKB"/>
</dbReference>
<dbReference type="GO" id="GO:0032045">
    <property type="term" value="C:guanyl-nucleotide exchange factor complex"/>
    <property type="evidence" value="ECO:0000318"/>
    <property type="project" value="GO_Central"/>
</dbReference>
<dbReference type="GO" id="GO:0005085">
    <property type="term" value="F:guanyl-nucleotide exchange factor activity"/>
    <property type="evidence" value="ECO:0000250"/>
    <property type="project" value="UniProtKB"/>
</dbReference>
<dbReference type="GO" id="GO:0003743">
    <property type="term" value="F:translation initiation factor activity"/>
    <property type="evidence" value="ECO:0000318"/>
    <property type="project" value="GO_Central"/>
</dbReference>
<dbReference type="GO" id="GO:0002183">
    <property type="term" value="P:cytoplasmic translational initiation"/>
    <property type="evidence" value="ECO:0000250"/>
    <property type="project" value="UniProtKB"/>
</dbReference>
<dbReference type="CDD" id="cd04198">
    <property type="entry name" value="eIF-2B_gamma_N"/>
    <property type="match status" value="1"/>
</dbReference>
<dbReference type="CDD" id="cd03356">
    <property type="entry name" value="LbH_G1P_AT_C_like"/>
    <property type="match status" value="1"/>
</dbReference>
<dbReference type="FunFam" id="3.90.550.10:FF:000219">
    <property type="entry name" value="Eukaryotic initiation factor eIF2B gamma subunit"/>
    <property type="match status" value="1"/>
</dbReference>
<dbReference type="Gene3D" id="2.160.10.10">
    <property type="entry name" value="Hexapeptide repeat proteins"/>
    <property type="match status" value="1"/>
</dbReference>
<dbReference type="Gene3D" id="3.90.550.10">
    <property type="entry name" value="Spore Coat Polysaccharide Biosynthesis Protein SpsA, Chain A"/>
    <property type="match status" value="1"/>
</dbReference>
<dbReference type="InterPro" id="IPR051960">
    <property type="entry name" value="eIF2B_gamma"/>
</dbReference>
<dbReference type="InterPro" id="IPR005835">
    <property type="entry name" value="NTP_transferase_dom"/>
</dbReference>
<dbReference type="InterPro" id="IPR029044">
    <property type="entry name" value="Nucleotide-diphossugar_trans"/>
</dbReference>
<dbReference type="InterPro" id="IPR011004">
    <property type="entry name" value="Trimer_LpxA-like_sf"/>
</dbReference>
<dbReference type="PANTHER" id="PTHR45989">
    <property type="entry name" value="TRANSLATION INITIATION FACTOR EIF-2B SUBUNIT GAMMA"/>
    <property type="match status" value="1"/>
</dbReference>
<dbReference type="PANTHER" id="PTHR45989:SF1">
    <property type="entry name" value="TRANSLATION INITIATION FACTOR EIF-2B SUBUNIT GAMMA"/>
    <property type="match status" value="1"/>
</dbReference>
<dbReference type="Pfam" id="PF25084">
    <property type="entry name" value="LbH_EIF2B"/>
    <property type="match status" value="1"/>
</dbReference>
<dbReference type="Pfam" id="PF00483">
    <property type="entry name" value="NTP_transferase"/>
    <property type="match status" value="1"/>
</dbReference>
<dbReference type="SUPFAM" id="SSF53448">
    <property type="entry name" value="Nucleotide-diphospho-sugar transferases"/>
    <property type="match status" value="1"/>
</dbReference>
<dbReference type="SUPFAM" id="SSF51161">
    <property type="entry name" value="Trimeric LpxA-like enzymes"/>
    <property type="match status" value="1"/>
</dbReference>
<sequence>MHEMQGILLCSGGGTRMPVLTRHVQKCLLPVVGVPMFLYPLSSLLRTGITDIKIFVREVLQLTLEKEVKKSKLLEKYPAHIEYICVNQEDFGTADLLKNHHSKITKDALIVSCDFISDASLIPLVDFFRATNSTLVALIADTCVNAPAPGSKSKKPKATDVMAIVESTGQLAFLCGDDDFDAPLVMEKSLKIFPSIKLTSKYNDCHVYAIRHKVLLNLSKSKHISSFKADFVPLLIDKQFEPDSDIKCFAYRLPHENGFVTAHANTLGSYFEVNKAIQKSFTRLMEYRGNGKNFNYKTDKIAAHESRIEESAEIDKDSVIKRSFISDNCRIGEKTKLKESIIAKGVVIGNGASISNSIICDGVEIGENADVTNCIVAKDQKVPAKGKVQNEVVEDGEDEEWTDD</sequence>
<gene>
    <name evidence="4 6" type="primary">eif-2Bgamma</name>
    <name evidence="3" type="synonym">ppp-1</name>
    <name evidence="6" type="ORF">C15F1.4</name>
</gene>
<feature type="chain" id="PRO_0000156081" description="Translation initiation factor eIF2B subunit gamma">
    <location>
        <begin position="1"/>
        <end position="404"/>
    </location>
</feature>
<protein>
    <recommendedName>
        <fullName>Translation initiation factor eIF2B subunit gamma</fullName>
    </recommendedName>
    <alternativeName>
        <fullName>Putative pyrophosphorylase ppp-1</fullName>
    </alternativeName>
    <alternativeName>
        <fullName>eIF2B GDP-GTP exchange factor subunit gamma</fullName>
    </alternativeName>
</protein>
<organism>
    <name type="scientific">Caenorhabditis elegans</name>
    <dbReference type="NCBI Taxonomy" id="6239"/>
    <lineage>
        <taxon>Eukaryota</taxon>
        <taxon>Metazoa</taxon>
        <taxon>Ecdysozoa</taxon>
        <taxon>Nematoda</taxon>
        <taxon>Chromadorea</taxon>
        <taxon>Rhabditida</taxon>
        <taxon>Rhabditina</taxon>
        <taxon>Rhabditomorpha</taxon>
        <taxon>Rhabditoidea</taxon>
        <taxon>Rhabditidae</taxon>
        <taxon>Peloderinae</taxon>
        <taxon>Caenorhabditis</taxon>
    </lineage>
</organism>
<proteinExistence type="evidence at transcript level"/>
<reference key="1">
    <citation type="journal article" date="1994" name="Nucleic Acids Res.">
        <title>Cloning by synteny: identifying C. briggsae homologues of C. elegans genes.</title>
        <authorList>
            <person name="Kuwabara P.E."/>
            <person name="Shah S."/>
        </authorList>
    </citation>
    <scope>NUCLEOTIDE SEQUENCE [MRNA]</scope>
</reference>
<reference key="2">
    <citation type="journal article" date="1998" name="Science">
        <title>Genome sequence of the nematode C. elegans: a platform for investigating biology.</title>
        <authorList>
            <consortium name="The C. elegans sequencing consortium"/>
        </authorList>
    </citation>
    <scope>NUCLEOTIDE SEQUENCE [LARGE SCALE GENOMIC DNA]</scope>
    <source>
        <strain>Bristol N2</strain>
    </source>
</reference>
<reference key="3">
    <citation type="journal article" date="1996" name="Biochem. J.">
        <title>Cloning of cDNA for the gamma-subunit of mammalian translation initiation factor 2B, the guanine nucleotide-exchange factor for eukaryotic initiation factor 2.</title>
        <authorList>
            <person name="Price N.T."/>
            <person name="Kimball S.R."/>
            <person name="Jefferson L.S."/>
            <person name="Proud C.G."/>
        </authorList>
    </citation>
    <scope>IDENTIFICATION OF FRAMESHIFT</scope>
</reference>